<sequence length="190" mass="20885">MVQLFGGALCADFPPKFLDASVLRQIPDNQEVFLQDSKENLTVIIELLEKIEKPFDGSVAAYHFNSIAFDNDASQRVIWRDKSLGEDDFEGMRSEKASGSSVQGCQRVLEKGKRNPESATNVAIFVNVITLIDFQTDIVISVNAPLPNTSSVPSSVENIPPSDQSIVRAALETIQRVTRSLVLVDKTVFA</sequence>
<reference key="1">
    <citation type="journal article" date="2001" name="Genetics">
        <title>Fission yeast Mog1p homologue, which interacts with the small GTPase Ran, is required for mitosis-to-interphase transition and poly(A)(+) RNA metabolism.</title>
        <authorList>
            <person name="Tatebayashi K."/>
            <person name="Tani T."/>
            <person name="Ikeda H."/>
        </authorList>
    </citation>
    <scope>NUCLEOTIDE SEQUENCE [GENOMIC DNA]</scope>
    <scope>FUNCTION</scope>
    <scope>SUBCELLULAR LOCATION</scope>
</reference>
<reference key="2">
    <citation type="journal article" date="2002" name="Nature">
        <title>The genome sequence of Schizosaccharomyces pombe.</title>
        <authorList>
            <person name="Wood V."/>
            <person name="Gwilliam R."/>
            <person name="Rajandream M.A."/>
            <person name="Lyne M.H."/>
            <person name="Lyne R."/>
            <person name="Stewart A."/>
            <person name="Sgouros J.G."/>
            <person name="Peat N."/>
            <person name="Hayles J."/>
            <person name="Baker S.G."/>
            <person name="Basham D."/>
            <person name="Bowman S."/>
            <person name="Brooks K."/>
            <person name="Brown D."/>
            <person name="Brown S."/>
            <person name="Chillingworth T."/>
            <person name="Churcher C.M."/>
            <person name="Collins M."/>
            <person name="Connor R."/>
            <person name="Cronin A."/>
            <person name="Davis P."/>
            <person name="Feltwell T."/>
            <person name="Fraser A."/>
            <person name="Gentles S."/>
            <person name="Goble A."/>
            <person name="Hamlin N."/>
            <person name="Harris D.E."/>
            <person name="Hidalgo J."/>
            <person name="Hodgson G."/>
            <person name="Holroyd S."/>
            <person name="Hornsby T."/>
            <person name="Howarth S."/>
            <person name="Huckle E.J."/>
            <person name="Hunt S."/>
            <person name="Jagels K."/>
            <person name="James K.D."/>
            <person name="Jones L."/>
            <person name="Jones M."/>
            <person name="Leather S."/>
            <person name="McDonald S."/>
            <person name="McLean J."/>
            <person name="Mooney P."/>
            <person name="Moule S."/>
            <person name="Mungall K.L."/>
            <person name="Murphy L.D."/>
            <person name="Niblett D."/>
            <person name="Odell C."/>
            <person name="Oliver K."/>
            <person name="O'Neil S."/>
            <person name="Pearson D."/>
            <person name="Quail M.A."/>
            <person name="Rabbinowitsch E."/>
            <person name="Rutherford K.M."/>
            <person name="Rutter S."/>
            <person name="Saunders D."/>
            <person name="Seeger K."/>
            <person name="Sharp S."/>
            <person name="Skelton J."/>
            <person name="Simmonds M.N."/>
            <person name="Squares R."/>
            <person name="Squares S."/>
            <person name="Stevens K."/>
            <person name="Taylor K."/>
            <person name="Taylor R.G."/>
            <person name="Tivey A."/>
            <person name="Walsh S.V."/>
            <person name="Warren T."/>
            <person name="Whitehead S."/>
            <person name="Woodward J.R."/>
            <person name="Volckaert G."/>
            <person name="Aert R."/>
            <person name="Robben J."/>
            <person name="Grymonprez B."/>
            <person name="Weltjens I."/>
            <person name="Vanstreels E."/>
            <person name="Rieger M."/>
            <person name="Schaefer M."/>
            <person name="Mueller-Auer S."/>
            <person name="Gabel C."/>
            <person name="Fuchs M."/>
            <person name="Duesterhoeft A."/>
            <person name="Fritzc C."/>
            <person name="Holzer E."/>
            <person name="Moestl D."/>
            <person name="Hilbert H."/>
            <person name="Borzym K."/>
            <person name="Langer I."/>
            <person name="Beck A."/>
            <person name="Lehrach H."/>
            <person name="Reinhardt R."/>
            <person name="Pohl T.M."/>
            <person name="Eger P."/>
            <person name="Zimmermann W."/>
            <person name="Wedler H."/>
            <person name="Wambutt R."/>
            <person name="Purnelle B."/>
            <person name="Goffeau A."/>
            <person name="Cadieu E."/>
            <person name="Dreano S."/>
            <person name="Gloux S."/>
            <person name="Lelaure V."/>
            <person name="Mottier S."/>
            <person name="Galibert F."/>
            <person name="Aves S.J."/>
            <person name="Xiang Z."/>
            <person name="Hunt C."/>
            <person name="Moore K."/>
            <person name="Hurst S.M."/>
            <person name="Lucas M."/>
            <person name="Rochet M."/>
            <person name="Gaillardin C."/>
            <person name="Tallada V.A."/>
            <person name="Garzon A."/>
            <person name="Thode G."/>
            <person name="Daga R.R."/>
            <person name="Cruzado L."/>
            <person name="Jimenez J."/>
            <person name="Sanchez M."/>
            <person name="del Rey F."/>
            <person name="Benito J."/>
            <person name="Dominguez A."/>
            <person name="Revuelta J.L."/>
            <person name="Moreno S."/>
            <person name="Armstrong J."/>
            <person name="Forsburg S.L."/>
            <person name="Cerutti L."/>
            <person name="Lowe T."/>
            <person name="McCombie W.R."/>
            <person name="Paulsen I."/>
            <person name="Potashkin J."/>
            <person name="Shpakovski G.V."/>
            <person name="Ussery D."/>
            <person name="Barrell B.G."/>
            <person name="Nurse P."/>
        </authorList>
    </citation>
    <scope>NUCLEOTIDE SEQUENCE [LARGE SCALE GENOMIC DNA]</scope>
    <source>
        <strain>972 / ATCC 24843</strain>
    </source>
</reference>
<proteinExistence type="inferred from homology"/>
<comment type="function">
    <text evidence="1">Involved in the Ran-GTPase system for nuclear protein import and poly(A)+ mRNA export. Required for mitosis-to-interphase transition.</text>
</comment>
<comment type="subcellular location">
    <subcellularLocation>
        <location evidence="1">Nucleus</location>
    </subcellularLocation>
</comment>
<comment type="similarity">
    <text evidence="2">Belongs to the MOG1 family.</text>
</comment>
<dbReference type="EMBL" id="CU329672">
    <property type="protein sequence ID" value="CAA21294.1"/>
    <property type="molecule type" value="Genomic_DNA"/>
</dbReference>
<dbReference type="PIR" id="T41169">
    <property type="entry name" value="T41169"/>
</dbReference>
<dbReference type="RefSeq" id="NP_588500.1">
    <property type="nucleotide sequence ID" value="NM_001023490.2"/>
</dbReference>
<dbReference type="SMR" id="O75002"/>
<dbReference type="BioGRID" id="275609">
    <property type="interactions" value="9"/>
</dbReference>
<dbReference type="FunCoup" id="O75002">
    <property type="interactions" value="454"/>
</dbReference>
<dbReference type="STRING" id="284812.O75002"/>
<dbReference type="iPTMnet" id="O75002"/>
<dbReference type="PaxDb" id="4896-SPCC1840.01c.1"/>
<dbReference type="EnsemblFungi" id="SPCC1840.01c.1">
    <property type="protein sequence ID" value="SPCC1840.01c.1:pep"/>
    <property type="gene ID" value="SPCC1840.01c"/>
</dbReference>
<dbReference type="GeneID" id="2539036"/>
<dbReference type="KEGG" id="spo:2539036"/>
<dbReference type="PomBase" id="SPCC1840.01c">
    <property type="gene designation" value="mog1"/>
</dbReference>
<dbReference type="VEuPathDB" id="FungiDB:SPCC1840.01c"/>
<dbReference type="eggNOG" id="KOG3329">
    <property type="taxonomic scope" value="Eukaryota"/>
</dbReference>
<dbReference type="HOGENOM" id="CLU_081345_1_2_1"/>
<dbReference type="InParanoid" id="O75002"/>
<dbReference type="OMA" id="ECSSAWM"/>
<dbReference type="PhylomeDB" id="O75002"/>
<dbReference type="PRO" id="PR:O75002"/>
<dbReference type="Proteomes" id="UP000002485">
    <property type="component" value="Chromosome III"/>
</dbReference>
<dbReference type="GO" id="GO:0005737">
    <property type="term" value="C:cytoplasm"/>
    <property type="evidence" value="ECO:0000314"/>
    <property type="project" value="PomBase"/>
</dbReference>
<dbReference type="GO" id="GO:0005829">
    <property type="term" value="C:cytosol"/>
    <property type="evidence" value="ECO:0007005"/>
    <property type="project" value="PomBase"/>
</dbReference>
<dbReference type="GO" id="GO:0005634">
    <property type="term" value="C:nucleus"/>
    <property type="evidence" value="ECO:0000314"/>
    <property type="project" value="PomBase"/>
</dbReference>
<dbReference type="GO" id="GO:0005085">
    <property type="term" value="F:guanyl-nucleotide exchange factor activity"/>
    <property type="evidence" value="ECO:0000318"/>
    <property type="project" value="GO_Central"/>
</dbReference>
<dbReference type="GO" id="GO:0031267">
    <property type="term" value="F:small GTPase binding"/>
    <property type="evidence" value="ECO:0000318"/>
    <property type="project" value="GO_Central"/>
</dbReference>
<dbReference type="GO" id="GO:0051301">
    <property type="term" value="P:cell division"/>
    <property type="evidence" value="ECO:0007669"/>
    <property type="project" value="UniProtKB-KW"/>
</dbReference>
<dbReference type="GO" id="GO:0016973">
    <property type="term" value="P:poly(A)+ mRNA export from nucleus"/>
    <property type="evidence" value="ECO:0000315"/>
    <property type="project" value="PomBase"/>
</dbReference>
<dbReference type="GO" id="GO:0006606">
    <property type="term" value="P:protein import into nucleus"/>
    <property type="evidence" value="ECO:0000266"/>
    <property type="project" value="PomBase"/>
</dbReference>
<dbReference type="CDD" id="cd00224">
    <property type="entry name" value="Mog1"/>
    <property type="match status" value="1"/>
</dbReference>
<dbReference type="Gene3D" id="3.40.1000.10">
    <property type="entry name" value="Mog1/PsbP, alpha/beta/alpha sandwich"/>
    <property type="match status" value="1"/>
</dbReference>
<dbReference type="InterPro" id="IPR007681">
    <property type="entry name" value="Mog1"/>
</dbReference>
<dbReference type="InterPro" id="IPR016123">
    <property type="entry name" value="Mog1/PsbP_a/b/a-sand"/>
</dbReference>
<dbReference type="PANTHER" id="PTHR15837">
    <property type="entry name" value="RAN GUANINE NUCLEOTIDE RELEASE FACTOR"/>
    <property type="match status" value="1"/>
</dbReference>
<dbReference type="PANTHER" id="PTHR15837:SF0">
    <property type="entry name" value="RAN GUANINE NUCLEOTIDE RELEASE FACTOR"/>
    <property type="match status" value="1"/>
</dbReference>
<dbReference type="Pfam" id="PF04603">
    <property type="entry name" value="Mog1"/>
    <property type="match status" value="1"/>
</dbReference>
<dbReference type="SUPFAM" id="SSF55724">
    <property type="entry name" value="Mog1p/PsbP-like"/>
    <property type="match status" value="1"/>
</dbReference>
<feature type="chain" id="PRO_0000215202" description="Nuclear import protein mog1">
    <location>
        <begin position="1"/>
        <end position="190"/>
    </location>
</feature>
<organism>
    <name type="scientific">Schizosaccharomyces pombe (strain 972 / ATCC 24843)</name>
    <name type="common">Fission yeast</name>
    <dbReference type="NCBI Taxonomy" id="284812"/>
    <lineage>
        <taxon>Eukaryota</taxon>
        <taxon>Fungi</taxon>
        <taxon>Dikarya</taxon>
        <taxon>Ascomycota</taxon>
        <taxon>Taphrinomycotina</taxon>
        <taxon>Schizosaccharomycetes</taxon>
        <taxon>Schizosaccharomycetales</taxon>
        <taxon>Schizosaccharomycetaceae</taxon>
        <taxon>Schizosaccharomyces</taxon>
    </lineage>
</organism>
<keyword id="KW-0131">Cell cycle</keyword>
<keyword id="KW-0132">Cell division</keyword>
<keyword id="KW-0498">Mitosis</keyword>
<keyword id="KW-0509">mRNA transport</keyword>
<keyword id="KW-0539">Nucleus</keyword>
<keyword id="KW-0653">Protein transport</keyword>
<keyword id="KW-1185">Reference proteome</keyword>
<keyword id="KW-0813">Transport</keyword>
<accession>O75002</accession>
<gene>
    <name type="primary">mog1</name>
    <name type="ORF">SPCC1840.01c</name>
    <name type="ORF">SPCC790.04c</name>
</gene>
<name>MOG1_SCHPO</name>
<evidence type="ECO:0000269" key="1">
    <source>
    </source>
</evidence>
<evidence type="ECO:0000305" key="2"/>
<protein>
    <recommendedName>
        <fullName>Nuclear import protein mog1</fullName>
    </recommendedName>
</protein>